<reference key="1">
    <citation type="journal article" date="2004" name="Proc. Natl. Acad. Sci. U.S.A.">
        <title>Genome sequence of the enterobacterial phytopathogen Erwinia carotovora subsp. atroseptica and characterization of virulence factors.</title>
        <authorList>
            <person name="Bell K.S."/>
            <person name="Sebaihia M."/>
            <person name="Pritchard L."/>
            <person name="Holden M.T.G."/>
            <person name="Hyman L.J."/>
            <person name="Holeva M.C."/>
            <person name="Thomson N.R."/>
            <person name="Bentley S.D."/>
            <person name="Churcher L.J.C."/>
            <person name="Mungall K."/>
            <person name="Atkin R."/>
            <person name="Bason N."/>
            <person name="Brooks K."/>
            <person name="Chillingworth T."/>
            <person name="Clark K."/>
            <person name="Doggett J."/>
            <person name="Fraser A."/>
            <person name="Hance Z."/>
            <person name="Hauser H."/>
            <person name="Jagels K."/>
            <person name="Moule S."/>
            <person name="Norbertczak H."/>
            <person name="Ormond D."/>
            <person name="Price C."/>
            <person name="Quail M.A."/>
            <person name="Sanders M."/>
            <person name="Walker D."/>
            <person name="Whitehead S."/>
            <person name="Salmond G.P.C."/>
            <person name="Birch P.R.J."/>
            <person name="Parkhill J."/>
            <person name="Toth I.K."/>
        </authorList>
    </citation>
    <scope>NUCLEOTIDE SEQUENCE [LARGE SCALE GENOMIC DNA]</scope>
    <source>
        <strain>SCRI 1043 / ATCC BAA-672</strain>
    </source>
</reference>
<comment type="function">
    <text evidence="1">Catalyzes the N-acylation of UDP-3-O-(hydroxytetradecanoyl)glucosamine using 3-hydroxytetradecanoyl-ACP as the acyl donor. Is involved in the biosynthesis of lipid A, a phosphorylated glycolipid that anchors the lipopolysaccharide to the outer membrane of the cell.</text>
</comment>
<comment type="catalytic activity">
    <reaction evidence="1">
        <text>a UDP-3-O-[(3R)-3-hydroxyacyl]-alpha-D-glucosamine + a (3R)-hydroxyacyl-[ACP] = a UDP-2-N,3-O-bis[(3R)-3-hydroxyacyl]-alpha-D-glucosamine + holo-[ACP] + H(+)</text>
        <dbReference type="Rhea" id="RHEA:53836"/>
        <dbReference type="Rhea" id="RHEA-COMP:9685"/>
        <dbReference type="Rhea" id="RHEA-COMP:9945"/>
        <dbReference type="ChEBI" id="CHEBI:15378"/>
        <dbReference type="ChEBI" id="CHEBI:64479"/>
        <dbReference type="ChEBI" id="CHEBI:78827"/>
        <dbReference type="ChEBI" id="CHEBI:137740"/>
        <dbReference type="ChEBI" id="CHEBI:137748"/>
        <dbReference type="EC" id="2.3.1.191"/>
    </reaction>
</comment>
<comment type="catalytic activity">
    <reaction evidence="1">
        <text>UDP-3-O-[(3R)-3-hydroxytetradecanoyl]-alpha-D-glucosamine + (3R)-hydroxytetradecanoyl-[ACP] = UDP-2-N,3-O-bis[(3R)-3-hydroxytetradecanoyl]-alpha-D-glucosamine + holo-[ACP] + H(+)</text>
        <dbReference type="Rhea" id="RHEA:17817"/>
        <dbReference type="Rhea" id="RHEA-COMP:9646"/>
        <dbReference type="Rhea" id="RHEA-COMP:9685"/>
        <dbReference type="ChEBI" id="CHEBI:15378"/>
        <dbReference type="ChEBI" id="CHEBI:64479"/>
        <dbReference type="ChEBI" id="CHEBI:71573"/>
        <dbReference type="ChEBI" id="CHEBI:78474"/>
        <dbReference type="ChEBI" id="CHEBI:78847"/>
    </reaction>
</comment>
<comment type="pathway">
    <text evidence="1">Glycolipid biosynthesis; lipid IV(A) biosynthesis; lipid IV(A) from (3R)-3-hydroxytetradecanoyl-[acyl-carrier-protein] and UDP-N-acetyl-alpha-D-glucosamine: step 3/6.</text>
</comment>
<comment type="subunit">
    <text evidence="1">Homotrimer.</text>
</comment>
<comment type="similarity">
    <text evidence="1">Belongs to the transferase hexapeptide repeat family. LpxD subfamily.</text>
</comment>
<name>LPXD_PECAS</name>
<organism>
    <name type="scientific">Pectobacterium atrosepticum (strain SCRI 1043 / ATCC BAA-672)</name>
    <name type="common">Erwinia carotovora subsp. atroseptica</name>
    <dbReference type="NCBI Taxonomy" id="218491"/>
    <lineage>
        <taxon>Bacteria</taxon>
        <taxon>Pseudomonadati</taxon>
        <taxon>Pseudomonadota</taxon>
        <taxon>Gammaproteobacteria</taxon>
        <taxon>Enterobacterales</taxon>
        <taxon>Pectobacteriaceae</taxon>
        <taxon>Pectobacterium</taxon>
    </lineage>
</organism>
<protein>
    <recommendedName>
        <fullName evidence="1">UDP-3-O-(3-hydroxymyristoyl)glucosamine N-acyltransferase</fullName>
        <shortName evidence="1">UDP-3-O-(3-OHC14)-GlcN N-acyltransferase</shortName>
        <ecNumber evidence="1">2.3.1.191</ecNumber>
    </recommendedName>
    <alternativeName>
        <fullName evidence="1">UDP-3-O-(3-hydroxytetradecanoyl)glucosamine N-acyltransferase</fullName>
    </alternativeName>
</protein>
<evidence type="ECO:0000255" key="1">
    <source>
        <dbReference type="HAMAP-Rule" id="MF_00523"/>
    </source>
</evidence>
<keyword id="KW-0012">Acyltransferase</keyword>
<keyword id="KW-0441">Lipid A biosynthesis</keyword>
<keyword id="KW-0444">Lipid biosynthesis</keyword>
<keyword id="KW-0443">Lipid metabolism</keyword>
<keyword id="KW-1185">Reference proteome</keyword>
<keyword id="KW-0677">Repeat</keyword>
<keyword id="KW-0808">Transferase</keyword>
<sequence length="340" mass="35811">MYSIRLDALAQQLDAQLHGDGDIVITGVASMHSAKTGQITFLSDSRYREQLAETQASAVVLTEADLPYCQVAALVVKNPYLTYAHMAQLLDTTPQPATDIAPSAVIASDATLGQQVSIGANAVIESGAQLGDGVVIGPGCFVGKNARIGAGTRLWANVTIYHRVELGEHCLIQSGTVIGSDGFGYANDRGNWVKIPQLGTVRIGDQVEIGASTTIDRGALDDTVIGNGVIIDNQCQIAHNVVIGDNTAVAGGVIMAGSLKIGRYCMIGGASVINGHMEICDKVTVTGMGMVMRPITEPGVYSSGIPLQPNKVWRKTAALVMNIDEISKRLKAVERKVDNV</sequence>
<accession>Q6D8D3</accession>
<feature type="chain" id="PRO_0000059672" description="UDP-3-O-(3-hydroxymyristoyl)glucosamine N-acyltransferase">
    <location>
        <begin position="1"/>
        <end position="340"/>
    </location>
</feature>
<feature type="active site" description="Proton acceptor" evidence="1">
    <location>
        <position position="239"/>
    </location>
</feature>
<proteinExistence type="inferred from homology"/>
<dbReference type="EC" id="2.3.1.191" evidence="1"/>
<dbReference type="EMBL" id="BX950851">
    <property type="protein sequence ID" value="CAG73952.1"/>
    <property type="molecule type" value="Genomic_DNA"/>
</dbReference>
<dbReference type="RefSeq" id="WP_011092639.1">
    <property type="nucleotide sequence ID" value="NC_004547.2"/>
</dbReference>
<dbReference type="SMR" id="Q6D8D3"/>
<dbReference type="STRING" id="218491.ECA1041"/>
<dbReference type="GeneID" id="57207870"/>
<dbReference type="KEGG" id="eca:ECA1041"/>
<dbReference type="PATRIC" id="fig|218491.5.peg.1049"/>
<dbReference type="eggNOG" id="COG1044">
    <property type="taxonomic scope" value="Bacteria"/>
</dbReference>
<dbReference type="HOGENOM" id="CLU_049865_0_1_6"/>
<dbReference type="OrthoDB" id="9784739at2"/>
<dbReference type="UniPathway" id="UPA00359">
    <property type="reaction ID" value="UER00479"/>
</dbReference>
<dbReference type="Proteomes" id="UP000007966">
    <property type="component" value="Chromosome"/>
</dbReference>
<dbReference type="GO" id="GO:0016020">
    <property type="term" value="C:membrane"/>
    <property type="evidence" value="ECO:0007669"/>
    <property type="project" value="GOC"/>
</dbReference>
<dbReference type="GO" id="GO:0016410">
    <property type="term" value="F:N-acyltransferase activity"/>
    <property type="evidence" value="ECO:0007669"/>
    <property type="project" value="InterPro"/>
</dbReference>
<dbReference type="GO" id="GO:0103118">
    <property type="term" value="F:UDP-3-O-(R-3-hydroxymyristoyl)-glucosamine N-acyltransferase activity"/>
    <property type="evidence" value="ECO:0007669"/>
    <property type="project" value="UniProtKB-EC"/>
</dbReference>
<dbReference type="GO" id="GO:0009245">
    <property type="term" value="P:lipid A biosynthetic process"/>
    <property type="evidence" value="ECO:0007669"/>
    <property type="project" value="UniProtKB-UniRule"/>
</dbReference>
<dbReference type="CDD" id="cd03352">
    <property type="entry name" value="LbH_LpxD"/>
    <property type="match status" value="1"/>
</dbReference>
<dbReference type="FunFam" id="2.160.10.10:FF:000005">
    <property type="entry name" value="UDP-3-O-(3-hydroxymyristoyl)glucosamine N-acyltransferase"/>
    <property type="match status" value="1"/>
</dbReference>
<dbReference type="Gene3D" id="1.20.5.170">
    <property type="match status" value="1"/>
</dbReference>
<dbReference type="Gene3D" id="2.160.10.10">
    <property type="entry name" value="Hexapeptide repeat proteins"/>
    <property type="match status" value="1"/>
</dbReference>
<dbReference type="Gene3D" id="3.40.1390.10">
    <property type="entry name" value="MurE/MurF, N-terminal domain"/>
    <property type="match status" value="1"/>
</dbReference>
<dbReference type="HAMAP" id="MF_00523">
    <property type="entry name" value="LpxD"/>
    <property type="match status" value="1"/>
</dbReference>
<dbReference type="InterPro" id="IPR001451">
    <property type="entry name" value="Hexapep"/>
</dbReference>
<dbReference type="InterPro" id="IPR018357">
    <property type="entry name" value="Hexapep_transf_CS"/>
</dbReference>
<dbReference type="InterPro" id="IPR007691">
    <property type="entry name" value="LpxD"/>
</dbReference>
<dbReference type="InterPro" id="IPR011004">
    <property type="entry name" value="Trimer_LpxA-like_sf"/>
</dbReference>
<dbReference type="InterPro" id="IPR020573">
    <property type="entry name" value="UDP_GlcNAc_AcTrfase_non-rep"/>
</dbReference>
<dbReference type="NCBIfam" id="TIGR01853">
    <property type="entry name" value="lipid_A_lpxD"/>
    <property type="match status" value="1"/>
</dbReference>
<dbReference type="NCBIfam" id="NF002060">
    <property type="entry name" value="PRK00892.1"/>
    <property type="match status" value="1"/>
</dbReference>
<dbReference type="PANTHER" id="PTHR43378">
    <property type="entry name" value="UDP-3-O-ACYLGLUCOSAMINE N-ACYLTRANSFERASE"/>
    <property type="match status" value="1"/>
</dbReference>
<dbReference type="PANTHER" id="PTHR43378:SF2">
    <property type="entry name" value="UDP-3-O-ACYLGLUCOSAMINE N-ACYLTRANSFERASE 1, MITOCHONDRIAL-RELATED"/>
    <property type="match status" value="1"/>
</dbReference>
<dbReference type="Pfam" id="PF00132">
    <property type="entry name" value="Hexapep"/>
    <property type="match status" value="3"/>
</dbReference>
<dbReference type="Pfam" id="PF04613">
    <property type="entry name" value="LpxD"/>
    <property type="match status" value="1"/>
</dbReference>
<dbReference type="SUPFAM" id="SSF51161">
    <property type="entry name" value="Trimeric LpxA-like enzymes"/>
    <property type="match status" value="1"/>
</dbReference>
<dbReference type="PROSITE" id="PS00101">
    <property type="entry name" value="HEXAPEP_TRANSFERASES"/>
    <property type="match status" value="3"/>
</dbReference>
<gene>
    <name evidence="1" type="primary">lpxD</name>
    <name type="ordered locus">ECA1041</name>
</gene>